<feature type="chain" id="PRO_0000067265" description="1-aminocyclopropane-1-carboxylate oxidase 1">
    <location>
        <begin position="1"/>
        <end position="314"/>
    </location>
</feature>
<feature type="domain" description="Fe2OG dioxygenase" evidence="1">
    <location>
        <begin position="153"/>
        <end position="253"/>
    </location>
</feature>
<feature type="binding site" evidence="1">
    <location>
        <position position="177"/>
    </location>
    <ligand>
        <name>Fe cation</name>
        <dbReference type="ChEBI" id="CHEBI:24875"/>
    </ligand>
</feature>
<feature type="binding site" evidence="1">
    <location>
        <position position="179"/>
    </location>
    <ligand>
        <name>Fe cation</name>
        <dbReference type="ChEBI" id="CHEBI:24875"/>
    </ligand>
</feature>
<feature type="binding site" evidence="1">
    <location>
        <position position="234"/>
    </location>
    <ligand>
        <name>Fe cation</name>
        <dbReference type="ChEBI" id="CHEBI:24875"/>
    </ligand>
</feature>
<name>ACCO1_MALDO</name>
<dbReference type="EC" id="1.14.17.4"/>
<dbReference type="EMBL" id="X61390">
    <property type="protein sequence ID" value="CAA43662.1"/>
    <property type="molecule type" value="mRNA"/>
</dbReference>
<dbReference type="EMBL" id="M81794">
    <property type="protein sequence ID" value="AAA33412.1"/>
    <property type="molecule type" value="mRNA"/>
</dbReference>
<dbReference type="EMBL" id="Y14005">
    <property type="protein sequence ID" value="CAA74328.1"/>
    <property type="molecule type" value="Genomic_DNA"/>
</dbReference>
<dbReference type="EMBL" id="AF030859">
    <property type="protein sequence ID" value="AAC36461.1"/>
    <property type="molecule type" value="Genomic_DNA"/>
</dbReference>
<dbReference type="PIR" id="S22513">
    <property type="entry name" value="S22513"/>
</dbReference>
<dbReference type="SMR" id="Q00985"/>
<dbReference type="BindingDB" id="Q00985"/>
<dbReference type="EnsemblPlants" id="mRNA:MD10G0280000">
    <property type="protein sequence ID" value="mRNA:MD10G0280000"/>
    <property type="gene ID" value="MD10G0280000"/>
</dbReference>
<dbReference type="Gramene" id="mRNA:MD10G0280000">
    <property type="protein sequence ID" value="mRNA:MD10G0280000"/>
    <property type="gene ID" value="MD10G0280000"/>
</dbReference>
<dbReference type="BioCyc" id="MetaCyc:MONOMER-16249"/>
<dbReference type="BRENDA" id="1.14.17.4">
    <property type="organism ID" value="3164"/>
</dbReference>
<dbReference type="SABIO-RK" id="Q00985"/>
<dbReference type="UniPathway" id="UPA00384">
    <property type="reaction ID" value="UER00563"/>
</dbReference>
<dbReference type="GO" id="GO:0009815">
    <property type="term" value="F:1-aminocyclopropane-1-carboxylate oxidase activity"/>
    <property type="evidence" value="ECO:0007669"/>
    <property type="project" value="UniProtKB-EC"/>
</dbReference>
<dbReference type="GO" id="GO:0031418">
    <property type="term" value="F:L-ascorbic acid binding"/>
    <property type="evidence" value="ECO:0007669"/>
    <property type="project" value="UniProtKB-KW"/>
</dbReference>
<dbReference type="GO" id="GO:0046872">
    <property type="term" value="F:metal ion binding"/>
    <property type="evidence" value="ECO:0007669"/>
    <property type="project" value="UniProtKB-KW"/>
</dbReference>
<dbReference type="GO" id="GO:0009693">
    <property type="term" value="P:ethylene biosynthetic process"/>
    <property type="evidence" value="ECO:0007669"/>
    <property type="project" value="UniProtKB-UniPathway"/>
</dbReference>
<dbReference type="GO" id="GO:0009835">
    <property type="term" value="P:fruit ripening"/>
    <property type="evidence" value="ECO:0007669"/>
    <property type="project" value="UniProtKB-KW"/>
</dbReference>
<dbReference type="FunFam" id="2.60.120.330:FF:000002">
    <property type="entry name" value="1-aminocyclopropane-1-carboxylate oxidase 1"/>
    <property type="match status" value="1"/>
</dbReference>
<dbReference type="Gene3D" id="2.60.120.330">
    <property type="entry name" value="B-lactam Antibiotic, Isopenicillin N Synthase, Chain"/>
    <property type="match status" value="1"/>
</dbReference>
<dbReference type="InterPro" id="IPR026992">
    <property type="entry name" value="DIOX_N"/>
</dbReference>
<dbReference type="InterPro" id="IPR044861">
    <property type="entry name" value="IPNS-like_FE2OG_OXY"/>
</dbReference>
<dbReference type="InterPro" id="IPR027443">
    <property type="entry name" value="IPNS-like_sf"/>
</dbReference>
<dbReference type="InterPro" id="IPR005123">
    <property type="entry name" value="Oxoglu/Fe-dep_dioxygenase_dom"/>
</dbReference>
<dbReference type="InterPro" id="IPR050295">
    <property type="entry name" value="Plant_2OG-oxidoreductases"/>
</dbReference>
<dbReference type="PANTHER" id="PTHR47991">
    <property type="entry name" value="OXOGLUTARATE/IRON-DEPENDENT DIOXYGENASE"/>
    <property type="match status" value="1"/>
</dbReference>
<dbReference type="Pfam" id="PF03171">
    <property type="entry name" value="2OG-FeII_Oxy"/>
    <property type="match status" value="1"/>
</dbReference>
<dbReference type="Pfam" id="PF14226">
    <property type="entry name" value="DIOX_N"/>
    <property type="match status" value="1"/>
</dbReference>
<dbReference type="SUPFAM" id="SSF51197">
    <property type="entry name" value="Clavaminate synthase-like"/>
    <property type="match status" value="1"/>
</dbReference>
<dbReference type="PROSITE" id="PS51471">
    <property type="entry name" value="FE2OG_OXY"/>
    <property type="match status" value="1"/>
</dbReference>
<organism>
    <name type="scientific">Malus domestica</name>
    <name type="common">Apple</name>
    <name type="synonym">Pyrus malus</name>
    <dbReference type="NCBI Taxonomy" id="3750"/>
    <lineage>
        <taxon>Eukaryota</taxon>
        <taxon>Viridiplantae</taxon>
        <taxon>Streptophyta</taxon>
        <taxon>Embryophyta</taxon>
        <taxon>Tracheophyta</taxon>
        <taxon>Spermatophyta</taxon>
        <taxon>Magnoliopsida</taxon>
        <taxon>eudicotyledons</taxon>
        <taxon>Gunneridae</taxon>
        <taxon>Pentapetalae</taxon>
        <taxon>rosids</taxon>
        <taxon>fabids</taxon>
        <taxon>Rosales</taxon>
        <taxon>Rosaceae</taxon>
        <taxon>Amygdaloideae</taxon>
        <taxon>Maleae</taxon>
        <taxon>Malus</taxon>
    </lineage>
</organism>
<sequence>MATFPVVDLSLVNGEERAATLEKINDACENWGFFELVNHGMSTELLDTVEKMTKDHYKKTMEQRFKEMVAAKGLDDVQSEIHDLDWESTFFLRHLPSSNISEIPDLEEEYRKTMKEFAVELEKLAEKLLDLLCENLGLEKGYLKKVFYGSKGPNFGTKVSNYPPCPKPDLIKGLRAHSDAGGIILLFQDDKVSGLQLLKDGEWVDVPPMHHSIVINLGDQIEVITNGKYKSVMHRVIAQSDGTRMSIASFYNPGNDSFISPAPAVLEKKTEDAPTYPKFVFDDYMKLYSGLKFQAKEPRFEAMKAKESTPVATA</sequence>
<keyword id="KW-0903">Direct protein sequencing</keyword>
<keyword id="KW-0266">Ethylene biosynthesis</keyword>
<keyword id="KW-0292">Fruit ripening</keyword>
<keyword id="KW-0408">Iron</keyword>
<keyword id="KW-0479">Metal-binding</keyword>
<keyword id="KW-0560">Oxidoreductase</keyword>
<keyword id="KW-0847">Vitamin C</keyword>
<reference key="1">
    <citation type="journal article" date="1992" name="Plant Mol. Biol.">
        <title>An ethylene-related cDNA from ripening apples.</title>
        <authorList>
            <person name="Ross G.S."/>
            <person name="Knighton M.L."/>
            <person name="Lay-Yee M."/>
        </authorList>
    </citation>
    <scope>NUCLEOTIDE SEQUENCE [MRNA]</scope>
    <source>
        <strain>cv. Golden Delicious</strain>
        <tissue>Fruit</tissue>
    </source>
</reference>
<reference key="2">
    <citation type="journal article" date="1992" name="Plant Physiol.">
        <title>Sequence of a cDNA coding for a 1-aminocyclopropane-1-carboxylate oxidase homolog from apple fruit.</title>
        <authorList>
            <person name="Dong J.G."/>
            <person name="Olsen D.B."/>
            <person name="Silverstone A."/>
            <person name="Yang S.F."/>
        </authorList>
    </citation>
    <scope>NUCLEOTIDE SEQUENCE [MRNA]</scope>
</reference>
<reference key="3">
    <citation type="submission" date="1998-05" db="EMBL/GenBank/DDBJ databases">
        <title>Allelic forms of ripening-related ACC oxidase in apple.</title>
        <authorList>
            <person name="Castiglione S."/>
            <person name="Malerba M."/>
            <person name="Pirola B."/>
            <person name="Bianchetti R."/>
            <person name="Sala F."/>
            <person name="Ventura M."/>
            <person name="Pancaldi M."/>
            <person name="Sansavini S."/>
        </authorList>
    </citation>
    <scope>NUCLEOTIDE SEQUENCE [GENOMIC DNA]</scope>
    <source>
        <strain>cv. Golden Delicious</strain>
    </source>
</reference>
<reference key="4">
    <citation type="journal article" date="1998" name="Plant Mol. Biol.">
        <title>Apple ACC-oxidase and polygalacturonase: ripening-specific gene expression and promoter analysis in transgenic tomato.</title>
        <authorList>
            <person name="Atkinson R.G."/>
            <person name="Bolitho K.M."/>
            <person name="Wright M.A."/>
            <person name="Iturriagagoitia-Bueno T."/>
            <person name="Reid S.J."/>
            <person name="Ross G.S."/>
        </authorList>
    </citation>
    <scope>NUCLEOTIDE SEQUENCE [GENOMIC DNA]</scope>
    <source>
        <strain>cv. Granny Smith</strain>
    </source>
</reference>
<reference key="5">
    <citation type="journal article" date="1992" name="Proc. Natl. Acad. Sci. U.S.A.">
        <title>Purification and characterization of 1-aminocyclopropane-1-carboxylate oxidase from apple fruit.</title>
        <authorList>
            <person name="Dong J.G."/>
            <person name="Fernandez-Maculet J.C."/>
            <person name="Yang S.F."/>
        </authorList>
    </citation>
    <scope>CHARACTERIZATION</scope>
    <scope>PROTEIN SEQUENCE OF 115-134</scope>
</reference>
<reference key="6">
    <citation type="journal article" date="1993" name="Planta">
        <title>Purification, properties and partial amino-acid sequence of 1-aminocyclopropane-1-carboxylic acid oxidase from apple fruits.</title>
        <authorList>
            <person name="Dupille E."/>
            <person name="Rombaldi C."/>
            <person name="Lelievre J.-M."/>
            <person name="Cleyet-Marel J.-C."/>
            <person name="Pech J.-C."/>
            <person name="Latche A."/>
        </authorList>
    </citation>
    <scope>CHARACTERIZATION</scope>
    <scope>PARTIAL PROTEIN SEQUENCE</scope>
</reference>
<evidence type="ECO:0000255" key="1">
    <source>
        <dbReference type="PROSITE-ProRule" id="PRU00805"/>
    </source>
</evidence>
<evidence type="ECO:0000305" key="2"/>
<proteinExistence type="evidence at protein level"/>
<comment type="catalytic activity">
    <reaction>
        <text>1-aminocyclopropane-1-carboxylate + L-ascorbate + O2 = ethene + L-dehydroascorbate + hydrogen cyanide + CO2 + 2 H2O</text>
        <dbReference type="Rhea" id="RHEA:23640"/>
        <dbReference type="ChEBI" id="CHEBI:15377"/>
        <dbReference type="ChEBI" id="CHEBI:15379"/>
        <dbReference type="ChEBI" id="CHEBI:16526"/>
        <dbReference type="ChEBI" id="CHEBI:18153"/>
        <dbReference type="ChEBI" id="CHEBI:18407"/>
        <dbReference type="ChEBI" id="CHEBI:38290"/>
        <dbReference type="ChEBI" id="CHEBI:58360"/>
        <dbReference type="ChEBI" id="CHEBI:58539"/>
        <dbReference type="EC" id="1.14.17.4"/>
    </reaction>
</comment>
<comment type="cofactor">
    <cofactor>
        <name>Fe cation</name>
        <dbReference type="ChEBI" id="CHEBI:24875"/>
    </cofactor>
</comment>
<comment type="pathway">
    <text>Alkene biosynthesis; ethylene biosynthesis via S-adenosyl-L-methionine; ethylene from S-adenosyl-L-methionine: step 2/2.</text>
</comment>
<comment type="subunit">
    <text>Monomer.</text>
</comment>
<comment type="developmental stage">
    <text>Expressed during fruit ripening.</text>
</comment>
<comment type="induction">
    <text>By ethylene and wounding.</text>
</comment>
<comment type="similarity">
    <text evidence="2">Belongs to the iron/ascorbate-dependent oxidoreductase family.</text>
</comment>
<accession>Q00985</accession>
<accession>O24063</accession>
<protein>
    <recommendedName>
        <fullName>1-aminocyclopropane-1-carboxylate oxidase 1</fullName>
        <shortName>ACC oxidase 1</shortName>
        <ecNumber>1.14.17.4</ecNumber>
    </recommendedName>
    <alternativeName>
        <fullName>Ethylene-forming enzyme</fullName>
        <shortName>EFE</shortName>
    </alternativeName>
    <alternativeName>
        <fullName>PAE12</fullName>
    </alternativeName>
    <alternativeName>
        <fullName>Protein AP4</fullName>
    </alternativeName>
</protein>